<keyword id="KW-0067">ATP-binding</keyword>
<keyword id="KW-0227">DNA damage</keyword>
<keyword id="KW-0234">DNA repair</keyword>
<keyword id="KW-0238">DNA-binding</keyword>
<keyword id="KW-0269">Exonuclease</keyword>
<keyword id="KW-0347">Helicase</keyword>
<keyword id="KW-0378">Hydrolase</keyword>
<keyword id="KW-0413">Isomerase</keyword>
<keyword id="KW-0540">Nuclease</keyword>
<keyword id="KW-0547">Nucleotide-binding</keyword>
<gene>
    <name evidence="1" type="primary">addA</name>
    <name type="ordered locus">BCE_1245</name>
</gene>
<protein>
    <recommendedName>
        <fullName evidence="1">ATP-dependent helicase/nuclease subunit A</fullName>
        <ecNumber evidence="1">3.1.-.-</ecNumber>
        <ecNumber evidence="1">5.6.2.4</ecNumber>
    </recommendedName>
    <alternativeName>
        <fullName evidence="1">ATP-dependent helicase/nuclease AddA</fullName>
    </alternativeName>
    <alternativeName>
        <fullName evidence="1">DNA 3'-5' helicase AddA</fullName>
    </alternativeName>
</protein>
<organism>
    <name type="scientific">Bacillus cereus (strain ATCC 10987 / NRS 248)</name>
    <dbReference type="NCBI Taxonomy" id="222523"/>
    <lineage>
        <taxon>Bacteria</taxon>
        <taxon>Bacillati</taxon>
        <taxon>Bacillota</taxon>
        <taxon>Bacilli</taxon>
        <taxon>Bacillales</taxon>
        <taxon>Bacillaceae</taxon>
        <taxon>Bacillus</taxon>
        <taxon>Bacillus cereus group</taxon>
    </lineage>
</organism>
<evidence type="ECO:0000255" key="1">
    <source>
        <dbReference type="HAMAP-Rule" id="MF_01451"/>
    </source>
</evidence>
<accession>Q73C23</accession>
<comment type="function">
    <text evidence="1">The heterodimer acts as both an ATP-dependent DNA helicase and an ATP-dependent, dual-direction single-stranded exonuclease. Recognizes the chi site generating a DNA molecule suitable for the initiation of homologous recombination. The AddA nuclease domain is required for chi fragment generation; this subunit has the helicase and 3' -&gt; 5' nuclease activities.</text>
</comment>
<comment type="catalytic activity">
    <reaction evidence="1">
        <text>Couples ATP hydrolysis with the unwinding of duplex DNA by translocating in the 3'-5' direction.</text>
        <dbReference type="EC" id="5.6.2.4"/>
    </reaction>
</comment>
<comment type="catalytic activity">
    <reaction evidence="1">
        <text>ATP + H2O = ADP + phosphate + H(+)</text>
        <dbReference type="Rhea" id="RHEA:13065"/>
        <dbReference type="ChEBI" id="CHEBI:15377"/>
        <dbReference type="ChEBI" id="CHEBI:15378"/>
        <dbReference type="ChEBI" id="CHEBI:30616"/>
        <dbReference type="ChEBI" id="CHEBI:43474"/>
        <dbReference type="ChEBI" id="CHEBI:456216"/>
        <dbReference type="EC" id="5.6.2.4"/>
    </reaction>
</comment>
<comment type="cofactor">
    <cofactor evidence="1">
        <name>Mg(2+)</name>
        <dbReference type="ChEBI" id="CHEBI:18420"/>
    </cofactor>
</comment>
<comment type="subunit">
    <text evidence="1">Heterodimer of AddA and AddB/RexB.</text>
</comment>
<comment type="similarity">
    <text evidence="1">Belongs to the helicase family. AddA subfamily.</text>
</comment>
<name>ADDA_BACC1</name>
<reference key="1">
    <citation type="journal article" date="2004" name="Nucleic Acids Res.">
        <title>The genome sequence of Bacillus cereus ATCC 10987 reveals metabolic adaptations and a large plasmid related to Bacillus anthracis pXO1.</title>
        <authorList>
            <person name="Rasko D.A."/>
            <person name="Ravel J."/>
            <person name="Oekstad O.A."/>
            <person name="Helgason E."/>
            <person name="Cer R.Z."/>
            <person name="Jiang L."/>
            <person name="Shores K.A."/>
            <person name="Fouts D.E."/>
            <person name="Tourasse N.J."/>
            <person name="Angiuoli S.V."/>
            <person name="Kolonay J.F."/>
            <person name="Nelson W.C."/>
            <person name="Kolstoe A.-B."/>
            <person name="Fraser C.M."/>
            <person name="Read T.D."/>
        </authorList>
    </citation>
    <scope>NUCLEOTIDE SEQUENCE [LARGE SCALE GENOMIC DNA]</scope>
    <source>
        <strain>ATCC 10987 / NRS 248</strain>
    </source>
</reference>
<sequence length="1241" mass="142702">MMENWPKKPEGSQWTDDQWKAVVANGRDILVAAAAGSGKTAVLVERIIKKIINEENPVDVDRLLVVTFTNAAAQEMKNRIGEALEKVLIDEPGSQHIRKQLSLLNKASISTIHSFCLQVIRGYYYMLDVDPRFRIANQTENELLKEEVLDDILEEEYGIEDNTIFFELVDRYTSDRSDDDLQRMILALHTESRAHPNPEKWLDKLVEAYDVEGKTIEDLVYASYLLEDVKFQLETAEQHIRKATELAMLPDGPAPRVETLQADLALLGTLSSAARESWTSVYEAMQNVSWQTLKRIKKSDYNEDIVKQVDSLRNKAKDEVKKLQEELFSRKPESFLRDFQDMHPVLEKLVQLVKVFTERFQAMKRDKGMVDFTDLEHFCLQILSEQSENGEMKPSAVALQYRNKFAEVLVDEYQDTNFVQESIIKFVTKDSESEGNLFMVGDVKQSIYRFRLAEPGLFLGKYKRFTQEGLGGGMKIDLAKNFRSRHEVLAGTNFIFKQIMGEEVGEIDYDADAELKLGASYPEGEDVAAELLCIQQTEEEVIDGEEGAEVEKAQLEARLMAQRIKAMVDSGYEVYDRKTDSMRPVQYRDFVILLRSMPWAPQIMEELKLQGIPVYADLATGYFEATEVNIMMNVFRVIDNPMQDIPLAAVLRSPIVGLNDEELATLRAHGKKGSFYEVMSSFLKGAPLEEEKELHDKLEWFYNLLQGWREFARQQSLSDLIWKVYGETGYYDFVGGLPAGKQRQANLRVLYDRARQYEATSFRGLFRFLRFIERILERGDDMGTARALGEQEDVVRIMTIHKSKGLEFPVVFVAGLGRRFNTQDLMKRFLLHKDFGFGSQFIDPRKRIKYTTLSQLAIKRKMKMELIAEEMRVLYVALTRAKEKLILIGTVKDANKEMEKWLDAREHSEWLLPDHIRAGASCYLDWIAPSLYRHRDSEILLELGQGSIPDEIYGYDTSWKVEVVDGNTLLAPEPVQEEKQELLEALREKKAVPLQSERKEEVYDRLMWKYGYEEATSHRAKQSVTEIKRNYQSEEGSDNAFIKKLRAPIQTRPRFMEKKGLTYAERGTAVHAVMQHVDLKKPITEEVIREQIAGMVNKELLTFEQAEEIAIEKVISFFDSDLGKRVLAAKSVEREVPFTMMLAAEEAYQDWQGKSGESILVQGVIDCMIEEEDGITLIDFKTDTIAGKFPGGFDQAKPILEERYKVQLSLYAKALEKSLQHPVKEKCLYFFDGNHVVKIEE</sequence>
<dbReference type="EC" id="3.1.-.-" evidence="1"/>
<dbReference type="EC" id="5.6.2.4" evidence="1"/>
<dbReference type="EMBL" id="AE017194">
    <property type="protein sequence ID" value="AAS40174.1"/>
    <property type="molecule type" value="Genomic_DNA"/>
</dbReference>
<dbReference type="SMR" id="Q73C23"/>
<dbReference type="KEGG" id="bca:BCE_1245"/>
<dbReference type="HOGENOM" id="CLU_001114_3_1_9"/>
<dbReference type="Proteomes" id="UP000002527">
    <property type="component" value="Chromosome"/>
</dbReference>
<dbReference type="GO" id="GO:0005829">
    <property type="term" value="C:cytosol"/>
    <property type="evidence" value="ECO:0007669"/>
    <property type="project" value="TreeGrafter"/>
</dbReference>
<dbReference type="GO" id="GO:0033202">
    <property type="term" value="C:DNA helicase complex"/>
    <property type="evidence" value="ECO:0007669"/>
    <property type="project" value="TreeGrafter"/>
</dbReference>
<dbReference type="GO" id="GO:0043138">
    <property type="term" value="F:3'-5' DNA helicase activity"/>
    <property type="evidence" value="ECO:0007669"/>
    <property type="project" value="UniProtKB-UniRule"/>
</dbReference>
<dbReference type="GO" id="GO:0008408">
    <property type="term" value="F:3'-5' exonuclease activity"/>
    <property type="evidence" value="ECO:0007669"/>
    <property type="project" value="UniProtKB-UniRule"/>
</dbReference>
<dbReference type="GO" id="GO:0005524">
    <property type="term" value="F:ATP binding"/>
    <property type="evidence" value="ECO:0007669"/>
    <property type="project" value="UniProtKB-UniRule"/>
</dbReference>
<dbReference type="GO" id="GO:0016887">
    <property type="term" value="F:ATP hydrolysis activity"/>
    <property type="evidence" value="ECO:0007669"/>
    <property type="project" value="RHEA"/>
</dbReference>
<dbReference type="GO" id="GO:0003690">
    <property type="term" value="F:double-stranded DNA binding"/>
    <property type="evidence" value="ECO:0007669"/>
    <property type="project" value="UniProtKB-UniRule"/>
</dbReference>
<dbReference type="GO" id="GO:0000724">
    <property type="term" value="P:double-strand break repair via homologous recombination"/>
    <property type="evidence" value="ECO:0007669"/>
    <property type="project" value="UniProtKB-UniRule"/>
</dbReference>
<dbReference type="CDD" id="cd18807">
    <property type="entry name" value="SF1_C_UvrD"/>
    <property type="match status" value="1"/>
</dbReference>
<dbReference type="FunFam" id="3.40.50.300:FF:001164">
    <property type="entry name" value="ATP-dependent helicase/nuclease subunit A"/>
    <property type="match status" value="1"/>
</dbReference>
<dbReference type="FunFam" id="3.40.50.300:FF:001187">
    <property type="entry name" value="ATP-dependent helicase/nuclease subunit A"/>
    <property type="match status" value="1"/>
</dbReference>
<dbReference type="FunFam" id="3.40.50.300:FF:001196">
    <property type="entry name" value="ATP-dependent helicase/nuclease subunit A"/>
    <property type="match status" value="1"/>
</dbReference>
<dbReference type="FunFam" id="3.40.50.300:FF:001236">
    <property type="entry name" value="ATP-dependent helicase/nuclease subunit A"/>
    <property type="match status" value="1"/>
</dbReference>
<dbReference type="Gene3D" id="3.90.320.10">
    <property type="match status" value="1"/>
</dbReference>
<dbReference type="Gene3D" id="6.10.250.2380">
    <property type="match status" value="1"/>
</dbReference>
<dbReference type="Gene3D" id="3.40.50.300">
    <property type="entry name" value="P-loop containing nucleotide triphosphate hydrolases"/>
    <property type="match status" value="4"/>
</dbReference>
<dbReference type="HAMAP" id="MF_01451">
    <property type="entry name" value="AddA"/>
    <property type="match status" value="1"/>
</dbReference>
<dbReference type="InterPro" id="IPR014152">
    <property type="entry name" value="AddA"/>
</dbReference>
<dbReference type="InterPro" id="IPR014017">
    <property type="entry name" value="DNA_helicase_UvrD-like_C"/>
</dbReference>
<dbReference type="InterPro" id="IPR000212">
    <property type="entry name" value="DNA_helicase_UvrD/REP"/>
</dbReference>
<dbReference type="InterPro" id="IPR027417">
    <property type="entry name" value="P-loop_NTPase"/>
</dbReference>
<dbReference type="InterPro" id="IPR011604">
    <property type="entry name" value="PDDEXK-like_dom_sf"/>
</dbReference>
<dbReference type="InterPro" id="IPR038726">
    <property type="entry name" value="PDDEXK_AddAB-type"/>
</dbReference>
<dbReference type="InterPro" id="IPR011335">
    <property type="entry name" value="Restrct_endonuc-II-like"/>
</dbReference>
<dbReference type="InterPro" id="IPR014016">
    <property type="entry name" value="UvrD-like_ATP-bd"/>
</dbReference>
<dbReference type="NCBIfam" id="TIGR02785">
    <property type="entry name" value="addA_Gpos"/>
    <property type="match status" value="1"/>
</dbReference>
<dbReference type="PANTHER" id="PTHR11070:SF48">
    <property type="entry name" value="ATP-DEPENDENT HELICASE_NUCLEASE SUBUNIT A"/>
    <property type="match status" value="1"/>
</dbReference>
<dbReference type="PANTHER" id="PTHR11070">
    <property type="entry name" value="UVRD / RECB / PCRA DNA HELICASE FAMILY MEMBER"/>
    <property type="match status" value="1"/>
</dbReference>
<dbReference type="Pfam" id="PF12705">
    <property type="entry name" value="PDDEXK_1"/>
    <property type="match status" value="1"/>
</dbReference>
<dbReference type="Pfam" id="PF00580">
    <property type="entry name" value="UvrD-helicase"/>
    <property type="match status" value="1"/>
</dbReference>
<dbReference type="Pfam" id="PF13361">
    <property type="entry name" value="UvrD_C"/>
    <property type="match status" value="1"/>
</dbReference>
<dbReference type="SUPFAM" id="SSF52540">
    <property type="entry name" value="P-loop containing nucleoside triphosphate hydrolases"/>
    <property type="match status" value="1"/>
</dbReference>
<dbReference type="SUPFAM" id="SSF52980">
    <property type="entry name" value="Restriction endonuclease-like"/>
    <property type="match status" value="1"/>
</dbReference>
<dbReference type="PROSITE" id="PS51198">
    <property type="entry name" value="UVRD_HELICASE_ATP_BIND"/>
    <property type="match status" value="1"/>
</dbReference>
<dbReference type="PROSITE" id="PS51217">
    <property type="entry name" value="UVRD_HELICASE_CTER"/>
    <property type="match status" value="1"/>
</dbReference>
<feature type="chain" id="PRO_0000379234" description="ATP-dependent helicase/nuclease subunit A">
    <location>
        <begin position="1"/>
        <end position="1241"/>
    </location>
</feature>
<feature type="domain" description="UvrD-like helicase ATP-binding" evidence="1">
    <location>
        <begin position="12"/>
        <end position="485"/>
    </location>
</feature>
<feature type="domain" description="UvrD-like helicase C-terminal" evidence="1">
    <location>
        <begin position="505"/>
        <end position="805"/>
    </location>
</feature>
<feature type="binding site" evidence="1">
    <location>
        <begin position="33"/>
        <end position="40"/>
    </location>
    <ligand>
        <name>ATP</name>
        <dbReference type="ChEBI" id="CHEBI:30616"/>
    </ligand>
</feature>
<proteinExistence type="inferred from homology"/>